<protein>
    <recommendedName>
        <fullName>Lon protease homolog</fullName>
        <ecNumber>3.4.21.-</ecNumber>
    </recommendedName>
</protein>
<name>LONH_MIMIV</name>
<feature type="chain" id="PRO_0000076159" description="Lon protease homolog">
    <location>
        <begin position="1"/>
        <end position="1023"/>
    </location>
</feature>
<feature type="domain" description="Lon proteolytic" evidence="3">
    <location>
        <begin position="810"/>
        <end position="1003"/>
    </location>
</feature>
<feature type="active site" evidence="1">
    <location>
        <position position="906"/>
    </location>
</feature>
<feature type="binding site" evidence="2">
    <location>
        <begin position="515"/>
        <end position="522"/>
    </location>
    <ligand>
        <name>ATP</name>
        <dbReference type="ChEBI" id="CHEBI:30616"/>
    </ligand>
</feature>
<gene>
    <name type="ordered locus">MIMI_L251</name>
</gene>
<accession>Q5UPT0</accession>
<evidence type="ECO:0000250" key="1"/>
<evidence type="ECO:0000255" key="2"/>
<evidence type="ECO:0000255" key="3">
    <source>
        <dbReference type="PROSITE-ProRule" id="PRU01122"/>
    </source>
</evidence>
<organismHost>
    <name type="scientific">Acanthamoeba polyphaga</name>
    <name type="common">Amoeba</name>
    <dbReference type="NCBI Taxonomy" id="5757"/>
</organismHost>
<dbReference type="EC" id="3.4.21.-"/>
<dbReference type="EMBL" id="AY653733">
    <property type="protein sequence ID" value="AAV50523.1"/>
    <property type="molecule type" value="Genomic_DNA"/>
</dbReference>
<dbReference type="SMR" id="Q5UPT0"/>
<dbReference type="Proteomes" id="UP000001134">
    <property type="component" value="Genome"/>
</dbReference>
<dbReference type="GO" id="GO:0005524">
    <property type="term" value="F:ATP binding"/>
    <property type="evidence" value="ECO:0007669"/>
    <property type="project" value="UniProtKB-KW"/>
</dbReference>
<dbReference type="GO" id="GO:0016887">
    <property type="term" value="F:ATP hydrolysis activity"/>
    <property type="evidence" value="ECO:0007669"/>
    <property type="project" value="InterPro"/>
</dbReference>
<dbReference type="GO" id="GO:0004176">
    <property type="term" value="F:ATP-dependent peptidase activity"/>
    <property type="evidence" value="ECO:0007669"/>
    <property type="project" value="InterPro"/>
</dbReference>
<dbReference type="GO" id="GO:0004252">
    <property type="term" value="F:serine-type endopeptidase activity"/>
    <property type="evidence" value="ECO:0007669"/>
    <property type="project" value="InterPro"/>
</dbReference>
<dbReference type="GO" id="GO:0003697">
    <property type="term" value="F:single-stranded DNA binding"/>
    <property type="evidence" value="ECO:0007669"/>
    <property type="project" value="TreeGrafter"/>
</dbReference>
<dbReference type="GO" id="GO:0051131">
    <property type="term" value="P:chaperone-mediated protein complex assembly"/>
    <property type="evidence" value="ECO:0007669"/>
    <property type="project" value="TreeGrafter"/>
</dbReference>
<dbReference type="GO" id="GO:0007005">
    <property type="term" value="P:mitochondrion organization"/>
    <property type="evidence" value="ECO:0007669"/>
    <property type="project" value="TreeGrafter"/>
</dbReference>
<dbReference type="GO" id="GO:0006515">
    <property type="term" value="P:protein quality control for misfolded or incompletely synthesized proteins"/>
    <property type="evidence" value="ECO:0007669"/>
    <property type="project" value="TreeGrafter"/>
</dbReference>
<dbReference type="Gene3D" id="1.10.8.60">
    <property type="match status" value="1"/>
</dbReference>
<dbReference type="Gene3D" id="3.30.230.10">
    <property type="match status" value="1"/>
</dbReference>
<dbReference type="Gene3D" id="3.40.50.300">
    <property type="entry name" value="P-loop containing nucleotide triphosphate hydrolases"/>
    <property type="match status" value="1"/>
</dbReference>
<dbReference type="InterPro" id="IPR003593">
    <property type="entry name" value="AAA+_ATPase"/>
</dbReference>
<dbReference type="InterPro" id="IPR003959">
    <property type="entry name" value="ATPase_AAA_core"/>
</dbReference>
<dbReference type="InterPro" id="IPR054594">
    <property type="entry name" value="Lon_lid"/>
</dbReference>
<dbReference type="InterPro" id="IPR008269">
    <property type="entry name" value="Lon_proteolytic"/>
</dbReference>
<dbReference type="InterPro" id="IPR027065">
    <property type="entry name" value="Lon_Prtase"/>
</dbReference>
<dbReference type="InterPro" id="IPR027417">
    <property type="entry name" value="P-loop_NTPase"/>
</dbReference>
<dbReference type="InterPro" id="IPR020568">
    <property type="entry name" value="Ribosomal_Su5_D2-typ_SF"/>
</dbReference>
<dbReference type="InterPro" id="IPR014721">
    <property type="entry name" value="Ribsml_uS5_D2-typ_fold_subgr"/>
</dbReference>
<dbReference type="PANTHER" id="PTHR43718">
    <property type="entry name" value="LON PROTEASE"/>
    <property type="match status" value="1"/>
</dbReference>
<dbReference type="PANTHER" id="PTHR43718:SF2">
    <property type="entry name" value="LON PROTEASE HOMOLOG, MITOCHONDRIAL"/>
    <property type="match status" value="1"/>
</dbReference>
<dbReference type="Pfam" id="PF00004">
    <property type="entry name" value="AAA"/>
    <property type="match status" value="1"/>
</dbReference>
<dbReference type="Pfam" id="PF05362">
    <property type="entry name" value="Lon_C"/>
    <property type="match status" value="1"/>
</dbReference>
<dbReference type="Pfam" id="PF22667">
    <property type="entry name" value="Lon_lid"/>
    <property type="match status" value="1"/>
</dbReference>
<dbReference type="PRINTS" id="PR00830">
    <property type="entry name" value="ENDOLAPTASE"/>
</dbReference>
<dbReference type="SMART" id="SM00382">
    <property type="entry name" value="AAA"/>
    <property type="match status" value="1"/>
</dbReference>
<dbReference type="SUPFAM" id="SSF52540">
    <property type="entry name" value="P-loop containing nucleoside triphosphate hydrolases"/>
    <property type="match status" value="1"/>
</dbReference>
<dbReference type="SUPFAM" id="SSF54211">
    <property type="entry name" value="Ribosomal protein S5 domain 2-like"/>
    <property type="match status" value="1"/>
</dbReference>
<dbReference type="PROSITE" id="PS51786">
    <property type="entry name" value="LON_PROTEOLYTIC"/>
    <property type="match status" value="1"/>
</dbReference>
<sequence length="1023" mass="116827">MTENNYGIRDIKNQHLKYSYKKYTDLIIGFEKHAKRMYDDWVIDINNRNIIMHKLDNLVRSMIKIYNECIMEIYNKTPNENESDNISNTNKKINNAIYNKIYNEINKIERIENKNNKLVDSFNSIREQLIELAKNNGFHTINDFIGLYVGENYESLFNNLDMETFELYKGVFVPLSISINKIKKKYRDTDKQDTITISKIPSKCDGLIENTCTVTITMNNIFTEIIFEGYVSADILNAYLRTSQIYSKHLFNVKNESKRIVKESYPHVDEYFIAKYAKLINSNVYFINNPDEMATKIDSDYMLFTDLTAKNFNTIVKEFVNSNLPTMFSYINVLLMGSNQDVNNAGLLFNLLKDRKIGSETLSDIIYHNLSFHLQIKLKKIINSIKNELGKIRSLTPEEIPIEKKLASMVNMPENVKNYIIEKNNEIKTGENNYKLQMAINGLMQFPWKPKDFNNNNYFQIKNSVTKSRNYLQNVAKKLNETVFGHENSKKVLIELVGKWIQNPESSGQVIGLVGPPGVGKTLLAKGISAALGIPLSIVGLGGMSDSADLIGHSFTYAGAQYGMIVRQMIKAGNWRSVMFFDEVDKVSKRNDTNEIYNTLIHITDPNMNQNFQDRFYSSAIDFDLSGVLIVFSYNSSEKLDPILLDRIKEIKISPYSLKEKILIAQNHVIKELCSNIGFDRDKINIGDDIVEYIIEKYTMEAGVRELKRKLEQILLKVNIDRFYMRGPFYNLLKKYNPETQSDDNSHSLEENQINMYVDYKPSLLEKNSDPNIINKIFNLDIDDHIIITKELVHKYLDKPTLTTEEIHKTNMIGVINGLYATSVGMGGIVPIQIYKNFVGDKNDGSNLKLKITGNQKQVMRESVMCALTTAVNVLNNSIKSKILDKFPHGFHVHAPDGGTPKDGPSAGCAFTTAFVSAILGKKINRHVAMTGEIELTGKISKIGGLMLTTGAKKAGIKCVYICEDNKEDYEIIKKKSPELFQDGLEIKIVNHIIEIITDPNVIIDIDVNDFDKDLISEFKKLK</sequence>
<keyword id="KW-0067">ATP-binding</keyword>
<keyword id="KW-0378">Hydrolase</keyword>
<keyword id="KW-0547">Nucleotide-binding</keyword>
<keyword id="KW-0645">Protease</keyword>
<keyword id="KW-1185">Reference proteome</keyword>
<keyword id="KW-0720">Serine protease</keyword>
<organism>
    <name type="scientific">Acanthamoeba polyphaga mimivirus</name>
    <name type="common">APMV</name>
    <dbReference type="NCBI Taxonomy" id="212035"/>
    <lineage>
        <taxon>Viruses</taxon>
        <taxon>Varidnaviria</taxon>
        <taxon>Bamfordvirae</taxon>
        <taxon>Nucleocytoviricota</taxon>
        <taxon>Megaviricetes</taxon>
        <taxon>Imitervirales</taxon>
        <taxon>Mimiviridae</taxon>
        <taxon>Megamimivirinae</taxon>
        <taxon>Mimivirus</taxon>
        <taxon>Mimivirus bradfordmassiliense</taxon>
    </lineage>
</organism>
<comment type="similarity">
    <text evidence="3">Belongs to the peptidase S16 family.</text>
</comment>
<reference key="1">
    <citation type="journal article" date="2004" name="Science">
        <title>The 1.2-megabase genome sequence of Mimivirus.</title>
        <authorList>
            <person name="Raoult D."/>
            <person name="Audic S."/>
            <person name="Robert C."/>
            <person name="Abergel C."/>
            <person name="Renesto P."/>
            <person name="Ogata H."/>
            <person name="La Scola B."/>
            <person name="Susan M."/>
            <person name="Claverie J.-M."/>
        </authorList>
    </citation>
    <scope>NUCLEOTIDE SEQUENCE [LARGE SCALE GENOMIC DNA]</scope>
    <source>
        <strain>Rowbotham-Bradford</strain>
    </source>
</reference>
<proteinExistence type="inferred from homology"/>